<reference key="1">
    <citation type="journal article" date="2004" name="Mol. Biol. Evol.">
        <title>Chloroplast phylogeny indicates that bryophytes are monophyletic.</title>
        <authorList>
            <person name="Nishiyama T."/>
            <person name="Wolf P.G."/>
            <person name="Kugita M."/>
            <person name="Sinclair R.B."/>
            <person name="Sugita M."/>
            <person name="Sugiura C."/>
            <person name="Wakasugi T."/>
            <person name="Yamada K."/>
            <person name="Yoshinaga K."/>
            <person name="Yamaguchi K."/>
            <person name="Ueda K."/>
            <person name="Hasebe M."/>
        </authorList>
    </citation>
    <scope>NUCLEOTIDE SEQUENCE [LARGE SCALE GENOMIC DNA]</scope>
    <source>
        <strain>Kingyoku</strain>
    </source>
</reference>
<proteinExistence type="inferred from homology"/>
<gene>
    <name evidence="1" type="primary">psbL</name>
</gene>
<protein>
    <recommendedName>
        <fullName evidence="1">Photosystem II reaction center protein L</fullName>
        <shortName evidence="1">PSII-L</shortName>
    </recommendedName>
</protein>
<geneLocation type="chloroplast"/>
<keyword id="KW-0150">Chloroplast</keyword>
<keyword id="KW-0472">Membrane</keyword>
<keyword id="KW-0602">Photosynthesis</keyword>
<keyword id="KW-0604">Photosystem II</keyword>
<keyword id="KW-0934">Plastid</keyword>
<keyword id="KW-0674">Reaction center</keyword>
<keyword id="KW-0793">Thylakoid</keyword>
<keyword id="KW-0812">Transmembrane</keyword>
<keyword id="KW-1133">Transmembrane helix</keyword>
<dbReference type="EMBL" id="AP004638">
    <property type="protein sequence ID" value="BAB84231.1"/>
    <property type="molecule type" value="Genomic_DNA"/>
</dbReference>
<dbReference type="RefSeq" id="NP_569644.1">
    <property type="nucleotide sequence ID" value="NC_003386.1"/>
</dbReference>
<dbReference type="SMR" id="P60152"/>
<dbReference type="GeneID" id="2545148"/>
<dbReference type="GO" id="GO:0009535">
    <property type="term" value="C:chloroplast thylakoid membrane"/>
    <property type="evidence" value="ECO:0007669"/>
    <property type="project" value="UniProtKB-SubCell"/>
</dbReference>
<dbReference type="GO" id="GO:0009539">
    <property type="term" value="C:photosystem II reaction center"/>
    <property type="evidence" value="ECO:0007669"/>
    <property type="project" value="InterPro"/>
</dbReference>
<dbReference type="GO" id="GO:0015979">
    <property type="term" value="P:photosynthesis"/>
    <property type="evidence" value="ECO:0007669"/>
    <property type="project" value="UniProtKB-UniRule"/>
</dbReference>
<dbReference type="HAMAP" id="MF_01317">
    <property type="entry name" value="PSII_PsbL"/>
    <property type="match status" value="1"/>
</dbReference>
<dbReference type="InterPro" id="IPR003372">
    <property type="entry name" value="PSII_PsbL"/>
</dbReference>
<dbReference type="InterPro" id="IPR037266">
    <property type="entry name" value="PSII_PsbL_sf"/>
</dbReference>
<dbReference type="NCBIfam" id="NF001972">
    <property type="entry name" value="PRK00753.1"/>
    <property type="match status" value="1"/>
</dbReference>
<dbReference type="Pfam" id="PF02419">
    <property type="entry name" value="PsbL"/>
    <property type="match status" value="1"/>
</dbReference>
<dbReference type="SUPFAM" id="SSF161017">
    <property type="entry name" value="Photosystem II reaction center protein L, PsbL"/>
    <property type="match status" value="1"/>
</dbReference>
<organism>
    <name type="scientific">Psilotum nudum</name>
    <name type="common">Whisk fern</name>
    <name type="synonym">Lycopodium nudum</name>
    <dbReference type="NCBI Taxonomy" id="3240"/>
    <lineage>
        <taxon>Eukaryota</taxon>
        <taxon>Viridiplantae</taxon>
        <taxon>Streptophyta</taxon>
        <taxon>Embryophyta</taxon>
        <taxon>Tracheophyta</taxon>
        <taxon>Polypodiopsida</taxon>
        <taxon>Ophioglossidae</taxon>
        <taxon>Psilotales</taxon>
        <taxon>Psilotaceae</taxon>
        <taxon>Psilotum</taxon>
    </lineage>
</organism>
<feature type="chain" id="PRO_0000219763" description="Photosystem II reaction center protein L">
    <location>
        <begin position="1"/>
        <end position="38"/>
    </location>
</feature>
<feature type="transmembrane region" description="Helical" evidence="1">
    <location>
        <begin position="17"/>
        <end position="37"/>
    </location>
</feature>
<evidence type="ECO:0000255" key="1">
    <source>
        <dbReference type="HAMAP-Rule" id="MF_01317"/>
    </source>
</evidence>
<sequence length="38" mass="4479">MTQPNPNKQSVELNRTSLYWGLLLIFVLAVLFSNYFFN</sequence>
<comment type="function">
    <text evidence="1">One of the components of the core complex of photosystem II (PSII). PSII is a light-driven water:plastoquinone oxidoreductase that uses light energy to abstract electrons from H(2)O, generating O(2) and a proton gradient subsequently used for ATP formation. It consists of a core antenna complex that captures photons, and an electron transfer chain that converts photonic excitation into a charge separation. This subunit is found at the monomer-monomer interface and is required for correct PSII assembly and/or dimerization.</text>
</comment>
<comment type="subunit">
    <text evidence="1">PSII is composed of 1 copy each of membrane proteins PsbA, PsbB, PsbC, PsbD, PsbE, PsbF, PsbH, PsbI, PsbJ, PsbK, PsbL, PsbM, PsbT, PsbX, PsbY, PsbZ, Psb30/Ycf12, at least 3 peripheral proteins of the oxygen-evolving complex and a large number of cofactors. It forms dimeric complexes.</text>
</comment>
<comment type="subcellular location">
    <subcellularLocation>
        <location evidence="1">Plastid</location>
        <location evidence="1">Chloroplast thylakoid membrane</location>
        <topology evidence="1">Single-pass membrane protein</topology>
    </subcellularLocation>
</comment>
<comment type="similarity">
    <text evidence="1">Belongs to the PsbL family.</text>
</comment>
<accession>P60152</accession>
<accession>P12165</accession>
<name>PSBL_PSINU</name>